<organism>
    <name type="scientific">Danio rerio</name>
    <name type="common">Zebrafish</name>
    <name type="synonym">Brachydanio rerio</name>
    <dbReference type="NCBI Taxonomy" id="7955"/>
    <lineage>
        <taxon>Eukaryota</taxon>
        <taxon>Metazoa</taxon>
        <taxon>Chordata</taxon>
        <taxon>Craniata</taxon>
        <taxon>Vertebrata</taxon>
        <taxon>Euteleostomi</taxon>
        <taxon>Actinopterygii</taxon>
        <taxon>Neopterygii</taxon>
        <taxon>Teleostei</taxon>
        <taxon>Ostariophysi</taxon>
        <taxon>Cypriniformes</taxon>
        <taxon>Danionidae</taxon>
        <taxon>Danioninae</taxon>
        <taxon>Danio</taxon>
    </lineage>
</organism>
<comment type="function">
    <text evidence="1">Co-chaperone that binds to numerous proteins and promotes their interaction with Hsp70 and Hsp90.</text>
</comment>
<comment type="subunit">
    <text evidence="1">Forms complexes with Hsp70 and Hsp90.</text>
</comment>
<comment type="subcellular location">
    <subcellularLocation>
        <location evidence="1">Cytoplasm</location>
    </subcellularLocation>
</comment>
<comment type="similarity">
    <text evidence="2">Belongs to the CDC37 family.</text>
</comment>
<feature type="chain" id="PRO_0000318525" description="Hsp90 co-chaperone Cdc37-like 1">
    <location>
        <begin position="1"/>
        <end position="313"/>
    </location>
</feature>
<proteinExistence type="evidence at transcript level"/>
<dbReference type="EMBL" id="BC152570">
    <property type="protein sequence ID" value="AAI52571.1"/>
    <property type="molecule type" value="mRNA"/>
</dbReference>
<dbReference type="RefSeq" id="NP_001103296.2">
    <property type="nucleotide sequence ID" value="NM_001109826.2"/>
</dbReference>
<dbReference type="SMR" id="A7YY97"/>
<dbReference type="FunCoup" id="A7YY97">
    <property type="interactions" value="598"/>
</dbReference>
<dbReference type="STRING" id="7955.ENSDARP00000110971"/>
<dbReference type="PaxDb" id="7955-ENSDARP00000110971"/>
<dbReference type="PeptideAtlas" id="A7YY97"/>
<dbReference type="GeneID" id="569357"/>
<dbReference type="KEGG" id="dre:569357"/>
<dbReference type="AGR" id="ZFIN:ZDB-GENE-030131-8865"/>
<dbReference type="CTD" id="55664"/>
<dbReference type="ZFIN" id="ZDB-GENE-030131-8865">
    <property type="gene designation" value="cdc37l1"/>
</dbReference>
<dbReference type="eggNOG" id="KOG2260">
    <property type="taxonomic scope" value="Eukaryota"/>
</dbReference>
<dbReference type="InParanoid" id="A7YY97"/>
<dbReference type="OrthoDB" id="440202at2759"/>
<dbReference type="PhylomeDB" id="A7YY97"/>
<dbReference type="Reactome" id="R-DRE-114608">
    <property type="pathway name" value="Platelet degranulation"/>
</dbReference>
<dbReference type="PRO" id="PR:A7YY97"/>
<dbReference type="Proteomes" id="UP000000437">
    <property type="component" value="Chromosome 10"/>
</dbReference>
<dbReference type="GO" id="GO:0005737">
    <property type="term" value="C:cytoplasm"/>
    <property type="evidence" value="ECO:0000318"/>
    <property type="project" value="GO_Central"/>
</dbReference>
<dbReference type="GO" id="GO:0031072">
    <property type="term" value="F:heat shock protein binding"/>
    <property type="evidence" value="ECO:0000318"/>
    <property type="project" value="GO_Central"/>
</dbReference>
<dbReference type="GO" id="GO:0051087">
    <property type="term" value="F:protein-folding chaperone binding"/>
    <property type="evidence" value="ECO:0000318"/>
    <property type="project" value="GO_Central"/>
</dbReference>
<dbReference type="GO" id="GO:0051082">
    <property type="term" value="F:unfolded protein binding"/>
    <property type="evidence" value="ECO:0000318"/>
    <property type="project" value="GO_Central"/>
</dbReference>
<dbReference type="GO" id="GO:0006457">
    <property type="term" value="P:protein folding"/>
    <property type="evidence" value="ECO:0000318"/>
    <property type="project" value="GO_Central"/>
</dbReference>
<dbReference type="GO" id="GO:0050821">
    <property type="term" value="P:protein stabilization"/>
    <property type="evidence" value="ECO:0000318"/>
    <property type="project" value="GO_Central"/>
</dbReference>
<dbReference type="FunFam" id="1.20.58.610:FF:000001">
    <property type="entry name" value="Hsp90 co-chaperone Cdc37-like 1"/>
    <property type="match status" value="1"/>
</dbReference>
<dbReference type="Gene3D" id="6.10.140.250">
    <property type="match status" value="1"/>
</dbReference>
<dbReference type="Gene3D" id="1.20.58.610">
    <property type="entry name" value="Cdc37, Hsp90 binding domain"/>
    <property type="match status" value="1"/>
</dbReference>
<dbReference type="InterPro" id="IPR004918">
    <property type="entry name" value="Cdc37"/>
</dbReference>
<dbReference type="InterPro" id="IPR013873">
    <property type="entry name" value="Cdc37_C"/>
</dbReference>
<dbReference type="InterPro" id="IPR013874">
    <property type="entry name" value="Cdc37_Hsp90-bd"/>
</dbReference>
<dbReference type="InterPro" id="IPR038189">
    <property type="entry name" value="Cdc37_Hsp90-bd_sf"/>
</dbReference>
<dbReference type="PANTHER" id="PTHR12800">
    <property type="entry name" value="CDC37-RELATED"/>
    <property type="match status" value="1"/>
</dbReference>
<dbReference type="PANTHER" id="PTHR12800:SF2">
    <property type="entry name" value="HSP90 CO-CHAPERONE CDC37-LIKE 1"/>
    <property type="match status" value="1"/>
</dbReference>
<dbReference type="Pfam" id="PF08564">
    <property type="entry name" value="CDC37_C"/>
    <property type="match status" value="1"/>
</dbReference>
<dbReference type="Pfam" id="PF08565">
    <property type="entry name" value="CDC37_M"/>
    <property type="match status" value="1"/>
</dbReference>
<dbReference type="SMART" id="SM01069">
    <property type="entry name" value="CDC37_C"/>
    <property type="match status" value="1"/>
</dbReference>
<dbReference type="SMART" id="SM01070">
    <property type="entry name" value="CDC37_M"/>
    <property type="match status" value="1"/>
</dbReference>
<dbReference type="SUPFAM" id="SSF101391">
    <property type="entry name" value="Hsp90 co-chaperone CDC37"/>
    <property type="match status" value="1"/>
</dbReference>
<sequence>MASLCQRQQHCVKASIASEWQLAEAQDQLCGLELHSSESVEQERARALASSTELSHTEHQWRLKERMLGTLCPEANRDVFDKSIINITQSWPNESDPDKSLNFVQRNEELLKHFGMLGRWDDSQRFLAEYHHLICEETANYLILWCFRLQAEKKEALMEQVAHQAVVMQFILEMARNTQQDPRGCFRHFFQKAKAGQEGYLDVFHTELQAFKDRVKEYTMKSTGETPKDTVHQNTPPACCLDPKEVFESLPQELKTCIQMQDMQILQNVLSSMNPQVAEYHVKRCLEAGLWTNIPRTSKDESSEVDEWKMMET</sequence>
<gene>
    <name type="primary">cdc37l1</name>
    <name type="ORF">zgc:171475</name>
</gene>
<evidence type="ECO:0000250" key="1"/>
<evidence type="ECO:0000305" key="2"/>
<protein>
    <recommendedName>
        <fullName>Hsp90 co-chaperone Cdc37-like 1</fullName>
    </recommendedName>
</protein>
<name>CD37L_DANRE</name>
<reference key="1">
    <citation type="submission" date="2007-09" db="EMBL/GenBank/DDBJ databases">
        <authorList>
            <consortium name="NIH - Zebrafish Gene Collection (ZGC) project"/>
        </authorList>
    </citation>
    <scope>NUCLEOTIDE SEQUENCE [LARGE SCALE MRNA]</scope>
    <source>
        <tissue>Testis</tissue>
    </source>
</reference>
<keyword id="KW-0143">Chaperone</keyword>
<keyword id="KW-0963">Cytoplasm</keyword>
<keyword id="KW-1185">Reference proteome</keyword>
<accession>A7YY97</accession>